<keyword id="KW-0150">Chloroplast</keyword>
<keyword id="KW-0456">Lyase</keyword>
<keyword id="KW-0460">Magnesium</keyword>
<keyword id="KW-0479">Metal-binding</keyword>
<keyword id="KW-0611">Plant defense</keyword>
<keyword id="KW-0934">Plastid</keyword>
<keyword id="KW-1185">Reference proteome</keyword>
<keyword id="KW-0809">Transit peptide</keyword>
<organism>
    <name type="scientific">Oryza sativa subsp. japonica</name>
    <name type="common">Rice</name>
    <dbReference type="NCBI Taxonomy" id="39947"/>
    <lineage>
        <taxon>Eukaryota</taxon>
        <taxon>Viridiplantae</taxon>
        <taxon>Streptophyta</taxon>
        <taxon>Embryophyta</taxon>
        <taxon>Tracheophyta</taxon>
        <taxon>Spermatophyta</taxon>
        <taxon>Magnoliopsida</taxon>
        <taxon>Liliopsida</taxon>
        <taxon>Poales</taxon>
        <taxon>Poaceae</taxon>
        <taxon>BOP clade</taxon>
        <taxon>Oryzoideae</taxon>
        <taxon>Oryzeae</taxon>
        <taxon>Oryzinae</taxon>
        <taxon>Oryza</taxon>
        <taxon>Oryza sativa</taxon>
    </lineage>
</organism>
<evidence type="ECO:0000250" key="1">
    <source>
        <dbReference type="UniProtKB" id="O81086"/>
    </source>
</evidence>
<evidence type="ECO:0000255" key="2"/>
<evidence type="ECO:0000269" key="3">
    <source>
    </source>
</evidence>
<evidence type="ECO:0000269" key="4">
    <source>
    </source>
</evidence>
<evidence type="ECO:0000269" key="5">
    <source>
    </source>
</evidence>
<evidence type="ECO:0000269" key="6">
    <source>
    </source>
</evidence>
<evidence type="ECO:0000303" key="7">
    <source>
    </source>
</evidence>
<evidence type="ECO:0000303" key="8">
    <source>
    </source>
</evidence>
<evidence type="ECO:0000303" key="9">
    <source>
    </source>
</evidence>
<evidence type="ECO:0000305" key="10"/>
<evidence type="ECO:0000305" key="11">
    <source>
    </source>
</evidence>
<evidence type="ECO:0000312" key="12">
    <source>
        <dbReference type="EMBL" id="ABA98308.2"/>
    </source>
</evidence>
<evidence type="ECO:0000312" key="13">
    <source>
        <dbReference type="EMBL" id="BAT17204.1"/>
    </source>
</evidence>
<sequence length="815" mass="91930">MLPSSICSMGQIPRTSPHYYGMLPKQMSKGHPPMVTRAVGGVEKGEVGGNVRSLQVMHSKELQAKIRKQLQRVELSPSLYDTAWVAMVPERSSSQAPCYPQCIEWILQNQHDDGSWGINSSSLSVNKDILLSTLACVVALKKWNAGSYHIKRGLNFVGRNFSVAMDVQNIAPVGFNVTFSGLITLASGMGLQLPVWQTDIDEIFHLRKIELERDSGGTISARKAFMAYVAEGFGSLQDWDQVMAYQRKNGSLFNSPSTTAAAAIHTFNDRTLNYLDSLTNKFGGPVPAMYPQNIYSQLCTVDALERTGISQKFAREIRDILDTTYRSWLHNEEEVMLDIPTCAMAFRLLRTHGYDITSDEMAHFSEQSSFDDSIHGYLNDTKTLLELFKTSQIRFSCEDLVLENIGTWSAKLLKQQLLSNKLSTSAQSEVEYVLKFPLHSTLDRLEHRRNIEQFKVEGSKVLKSGYCGSHSNEEILALAVDYFHSSQSVYQQELKYFESWVKQCRLDELKFARVMPLIVHFSSAATIFAPELADARMVLSQTCMLITVYDDFFDCPEISREEKENYIALIEKWDNHAEIGFCSKNVEIVFYAVYNTYKQIGEKAALKQNRSIMDQLVEDLVSSAKAMMVEADWTATKYIPATMEEYMSNAEVSGAFASFVCPPLYFLGLKLSEEDVKSHEYTQLLKLTNVIGRLQNDSQTYRKEILAGKVNSVLLRALTDSGNTSPESIEAAKEIVNRDAESSMVEMRSLVFSEGGPIPRPCKDRFWEMCKIVFYFYSEDDAYRTPKETMSSARAVILDPLRLIPPPSCPETLSS</sequence>
<accession>Q2QQJ5</accession>
<accession>A0A0P0YAB2</accession>
<accession>Q00G36</accession>
<accession>Q60HB4</accession>
<name>KSL10_ORYSJ</name>
<dbReference type="EC" id="4.2.3.29" evidence="3 6"/>
<dbReference type="EC" id="4.2.3.99" evidence="6"/>
<dbReference type="EMBL" id="DQ823355">
    <property type="protein sequence ID" value="ABH10735.1"/>
    <property type="molecule type" value="mRNA"/>
</dbReference>
<dbReference type="EMBL" id="DP000011">
    <property type="protein sequence ID" value="ABA98308.2"/>
    <property type="molecule type" value="Genomic_DNA"/>
</dbReference>
<dbReference type="EMBL" id="AP008218">
    <property type="protein sequence ID" value="BAF29818.1"/>
    <property type="molecule type" value="Genomic_DNA"/>
</dbReference>
<dbReference type="EMBL" id="AP014968">
    <property type="protein sequence ID" value="BAT17204.1"/>
    <property type="molecule type" value="Genomic_DNA"/>
</dbReference>
<dbReference type="EMBL" id="AB126937">
    <property type="protein sequence ID" value="BAD54752.1"/>
    <property type="molecule type" value="mRNA"/>
</dbReference>
<dbReference type="RefSeq" id="XP_015618915.1">
    <property type="nucleotide sequence ID" value="XM_015763429.1"/>
</dbReference>
<dbReference type="SMR" id="Q2QQJ5"/>
<dbReference type="FunCoup" id="Q2QQJ5">
    <property type="interactions" value="130"/>
</dbReference>
<dbReference type="STRING" id="39947.Q2QQJ5"/>
<dbReference type="PaxDb" id="39947-Q2QQJ5"/>
<dbReference type="EnsemblPlants" id="Os12t0491800-01">
    <property type="protein sequence ID" value="Os12t0491800-01"/>
    <property type="gene ID" value="Os12g0491800"/>
</dbReference>
<dbReference type="Gramene" id="Os12t0491800-01">
    <property type="protein sequence ID" value="Os12t0491800-01"/>
    <property type="gene ID" value="Os12g0491800"/>
</dbReference>
<dbReference type="KEGG" id="dosa:Os12g0491800"/>
<dbReference type="eggNOG" id="ENOG502QVGX">
    <property type="taxonomic scope" value="Eukaryota"/>
</dbReference>
<dbReference type="HOGENOM" id="CLU_003125_2_0_1"/>
<dbReference type="InParanoid" id="Q2QQJ5"/>
<dbReference type="OMA" id="HRCNIEN"/>
<dbReference type="OrthoDB" id="2343925at2759"/>
<dbReference type="BRENDA" id="4.2.3.29">
    <property type="organism ID" value="4460"/>
</dbReference>
<dbReference type="BRENDA" id="4.2.3.99">
    <property type="organism ID" value="4460"/>
</dbReference>
<dbReference type="PlantReactome" id="R-OSA-1119371">
    <property type="pathway name" value="Oryzalexin A-F biosynthesis"/>
</dbReference>
<dbReference type="Proteomes" id="UP000000763">
    <property type="component" value="Chromosome 12"/>
</dbReference>
<dbReference type="Proteomes" id="UP000059680">
    <property type="component" value="Chromosome 12"/>
</dbReference>
<dbReference type="GO" id="GO:0009507">
    <property type="term" value="C:chloroplast"/>
    <property type="evidence" value="ECO:0007669"/>
    <property type="project" value="UniProtKB-SubCell"/>
</dbReference>
<dbReference type="GO" id="GO:0034280">
    <property type="term" value="F:ent-sandaracopimaradiene synthase activity"/>
    <property type="evidence" value="ECO:0007669"/>
    <property type="project" value="UniProtKB-EC"/>
</dbReference>
<dbReference type="GO" id="GO:0000287">
    <property type="term" value="F:magnesium ion binding"/>
    <property type="evidence" value="ECO:0000318"/>
    <property type="project" value="GO_Central"/>
</dbReference>
<dbReference type="GO" id="GO:0010333">
    <property type="term" value="F:terpene synthase activity"/>
    <property type="evidence" value="ECO:0000318"/>
    <property type="project" value="GO_Central"/>
</dbReference>
<dbReference type="GO" id="GO:0006952">
    <property type="term" value="P:defense response"/>
    <property type="evidence" value="ECO:0007669"/>
    <property type="project" value="UniProtKB-KW"/>
</dbReference>
<dbReference type="GO" id="GO:0016102">
    <property type="term" value="P:diterpenoid biosynthetic process"/>
    <property type="evidence" value="ECO:0000318"/>
    <property type="project" value="GO_Central"/>
</dbReference>
<dbReference type="FunFam" id="1.50.10.160:FF:000002">
    <property type="entry name" value="cis-abienol synthase, chloroplastic"/>
    <property type="match status" value="1"/>
</dbReference>
<dbReference type="FunFam" id="1.50.10.130:FF:000003">
    <property type="entry name" value="Ent-cassa-12,15-diene synthase"/>
    <property type="match status" value="1"/>
</dbReference>
<dbReference type="FunFam" id="1.10.600.10:FF:000005">
    <property type="entry name" value="Ent-kaur-16-ene synthase, chloroplastic"/>
    <property type="match status" value="1"/>
</dbReference>
<dbReference type="Gene3D" id="1.50.10.160">
    <property type="match status" value="1"/>
</dbReference>
<dbReference type="Gene3D" id="1.10.600.10">
    <property type="entry name" value="Farnesyl Diphosphate Synthase"/>
    <property type="match status" value="1"/>
</dbReference>
<dbReference type="Gene3D" id="1.50.10.130">
    <property type="entry name" value="Terpene synthase, N-terminal domain"/>
    <property type="match status" value="1"/>
</dbReference>
<dbReference type="InterPro" id="IPR008949">
    <property type="entry name" value="Isoprenoid_synthase_dom_sf"/>
</dbReference>
<dbReference type="InterPro" id="IPR001906">
    <property type="entry name" value="Terpene_synth_N"/>
</dbReference>
<dbReference type="InterPro" id="IPR036965">
    <property type="entry name" value="Terpene_synth_N_sf"/>
</dbReference>
<dbReference type="InterPro" id="IPR050148">
    <property type="entry name" value="Terpene_synthase-like"/>
</dbReference>
<dbReference type="InterPro" id="IPR005630">
    <property type="entry name" value="Terpene_synthase_metal-bd"/>
</dbReference>
<dbReference type="InterPro" id="IPR008930">
    <property type="entry name" value="Terpenoid_cyclase/PrenylTrfase"/>
</dbReference>
<dbReference type="PANTHER" id="PTHR31739">
    <property type="entry name" value="ENT-COPALYL DIPHOSPHATE SYNTHASE, CHLOROPLASTIC"/>
    <property type="match status" value="1"/>
</dbReference>
<dbReference type="PANTHER" id="PTHR31739:SF17">
    <property type="entry name" value="ENT-SANDARACOPIMARA-8(14),15-DIENE SYNTHASE, CHLOROPLASTIC"/>
    <property type="match status" value="1"/>
</dbReference>
<dbReference type="Pfam" id="PF01397">
    <property type="entry name" value="Terpene_synth"/>
    <property type="match status" value="1"/>
</dbReference>
<dbReference type="Pfam" id="PF03936">
    <property type="entry name" value="Terpene_synth_C"/>
    <property type="match status" value="1"/>
</dbReference>
<dbReference type="SFLD" id="SFLDG01014">
    <property type="entry name" value="Terpene_Cyclase_Like_1_N-term"/>
    <property type="match status" value="1"/>
</dbReference>
<dbReference type="SUPFAM" id="SSF48239">
    <property type="entry name" value="Terpenoid cyclases/Protein prenyltransferases"/>
    <property type="match status" value="2"/>
</dbReference>
<dbReference type="SUPFAM" id="SSF48576">
    <property type="entry name" value="Terpenoid synthases"/>
    <property type="match status" value="1"/>
</dbReference>
<protein>
    <recommendedName>
        <fullName evidence="7">Ent-sandaracopimara-8(14),15-diene synthase, chloroplastic</fullName>
        <ecNumber evidence="3 6">4.2.3.29</ecNumber>
    </recommendedName>
    <alternativeName>
        <fullName evidence="8">Ent-kaurene synthase-like 10</fullName>
        <shortName evidence="8">OsKSL10</shortName>
    </alternativeName>
    <alternativeName>
        <fullName evidence="7">Ent-sandaracopimaradiene synthase</fullName>
    </alternativeName>
    <alternativeName>
        <fullName evidence="9">Labdatriene synthase</fullName>
        <ecNumber evidence="6">4.2.3.99</ecNumber>
    </alternativeName>
</protein>
<proteinExistence type="evidence at protein level"/>
<reference key="1">
    <citation type="journal article" date="2006" name="Phytochemistry">
        <title>Uncovering the complex metabolic network underlying diterpenoid phytoalexin biosynthesis in rice and other cereal crop plants.</title>
        <authorList>
            <person name="Peters R.J."/>
        </authorList>
    </citation>
    <scope>NUCLEOTIDE SEQUENCE [MRNA]</scope>
    <source>
        <strain>cv. Nipponbare</strain>
    </source>
</reference>
<reference key="2">
    <citation type="journal article" date="2005" name="BMC Biol.">
        <title>The sequence of rice chromosomes 11 and 12, rich in disease resistance genes and recent gene duplications.</title>
        <authorList>
            <consortium name="The rice chromosomes 11 and 12 sequencing consortia"/>
        </authorList>
    </citation>
    <scope>NUCLEOTIDE SEQUENCE [LARGE SCALE GENOMIC DNA]</scope>
    <source>
        <strain>cv. Nipponbare</strain>
    </source>
</reference>
<reference key="3">
    <citation type="journal article" date="2005" name="Nature">
        <title>The map-based sequence of the rice genome.</title>
        <authorList>
            <consortium name="International rice genome sequencing project (IRGSP)"/>
        </authorList>
    </citation>
    <scope>NUCLEOTIDE SEQUENCE [LARGE SCALE GENOMIC DNA]</scope>
    <source>
        <strain>cv. Nipponbare</strain>
    </source>
</reference>
<reference key="4">
    <citation type="journal article" date="2008" name="Nucleic Acids Res.">
        <title>The rice annotation project database (RAP-DB): 2008 update.</title>
        <authorList>
            <consortium name="The rice annotation project (RAP)"/>
        </authorList>
    </citation>
    <scope>GENOME REANNOTATION</scope>
    <source>
        <strain>cv. Nipponbare</strain>
    </source>
</reference>
<reference key="5">
    <citation type="journal article" date="2013" name="Rice">
        <title>Improvement of the Oryza sativa Nipponbare reference genome using next generation sequence and optical map data.</title>
        <authorList>
            <person name="Kawahara Y."/>
            <person name="de la Bastide M."/>
            <person name="Hamilton J.P."/>
            <person name="Kanamori H."/>
            <person name="McCombie W.R."/>
            <person name="Ouyang S."/>
            <person name="Schwartz D.C."/>
            <person name="Tanaka T."/>
            <person name="Wu J."/>
            <person name="Zhou S."/>
            <person name="Childs K.L."/>
            <person name="Davidson R.M."/>
            <person name="Lin H."/>
            <person name="Quesada-Ocampo L."/>
            <person name="Vaillancourt B."/>
            <person name="Sakai H."/>
            <person name="Lee S.S."/>
            <person name="Kim J."/>
            <person name="Numa H."/>
            <person name="Itoh T."/>
            <person name="Buell C.R."/>
            <person name="Matsumoto T."/>
        </authorList>
    </citation>
    <scope>GENOME REANNOTATION</scope>
    <source>
        <strain>cv. Nipponbare</strain>
    </source>
</reference>
<reference key="6">
    <citation type="journal article" date="2004" name="Biosci. Biotechnol. Biochem.">
        <title>Diterpene cyclases responsible for the biosynthesis of phytoalexins, momilactones A, B, and oryzalexins A-F in rice.</title>
        <authorList>
            <person name="Otomo K."/>
            <person name="Kanno Y."/>
            <person name="Motegi A."/>
            <person name="Kenmoku H."/>
            <person name="Yamane H."/>
            <person name="Mitsuhashi W."/>
            <person name="Oikawa H."/>
            <person name="Toshima H."/>
            <person name="Itoh H."/>
            <person name="Matsuoka M."/>
            <person name="Sassa T."/>
            <person name="Toyomasu T."/>
        </authorList>
    </citation>
    <scope>NUCLEOTIDE SEQUENCE [MRNA] OF 66-815</scope>
    <scope>FUNCTION</scope>
    <scope>CATALYTIC ACTIVITY</scope>
    <scope>INDUCTION</scope>
    <source>
        <strain>cv. Nipponbare</strain>
    </source>
</reference>
<reference key="7">
    <citation type="journal article" date="2006" name="Biosci. Biotechnol. Biochem.">
        <title>Characterization of a rice gene family encoding type-A diterpene cyclases.</title>
        <authorList>
            <person name="Kanno Y."/>
            <person name="Otomo K."/>
            <person name="Kenmoku H."/>
            <person name="Mitsuhashi W."/>
            <person name="Yamane H."/>
            <person name="Oikawa H."/>
            <person name="Toshima H."/>
            <person name="Matsuoka M."/>
            <person name="Sassa T."/>
            <person name="Toyomasu T."/>
        </authorList>
    </citation>
    <scope>INDUCTION</scope>
</reference>
<reference key="8">
    <citation type="journal article" date="2007" name="Phytochemistry">
        <title>Functional characterization of the rice kaurene synthase-like gene family.</title>
        <authorList>
            <person name="Xu M."/>
            <person name="Wilderman P.R."/>
            <person name="Morrone D."/>
            <person name="Xu J."/>
            <person name="Roy A."/>
            <person name="Margis-Pinheiro M."/>
            <person name="Upadhyaya N.M."/>
            <person name="Coates R.M."/>
            <person name="Peters R.J."/>
        </authorList>
    </citation>
    <scope>FUNCTION</scope>
</reference>
<reference key="9">
    <citation type="journal article" date="2011" name="Biochem. J.">
        <title>Evident and latent plasticity across the rice diterpene synthase family with potential implications for the evolution of diterpenoid metabolism in the cereals.</title>
        <authorList>
            <person name="Morrone D."/>
            <person name="Hillwig M.L."/>
            <person name="Mead M.E."/>
            <person name="Lowry L."/>
            <person name="Fulton D.B."/>
            <person name="Peters R.J."/>
        </authorList>
    </citation>
    <scope>FUNCTION</scope>
    <scope>CATALYTIC ACTIVITY</scope>
    <scope>BIOPHYSICOCHEMICAL PROPERTIES</scope>
</reference>
<feature type="transit peptide" description="Chloroplast" evidence="2">
    <location>
        <begin position="1"/>
        <end position="38"/>
    </location>
</feature>
<feature type="chain" id="PRO_0000372323" description="Ent-sandaracopimara-8(14),15-diene synthase, chloroplastic">
    <location>
        <begin position="39"/>
        <end position="815"/>
    </location>
</feature>
<feature type="short sequence motif" description="DDXXD motif" evidence="10">
    <location>
        <begin position="550"/>
        <end position="554"/>
    </location>
</feature>
<feature type="binding site" evidence="1">
    <location>
        <position position="550"/>
    </location>
    <ligand>
        <name>Mg(2+)</name>
        <dbReference type="ChEBI" id="CHEBI:18420"/>
        <label>1</label>
    </ligand>
</feature>
<feature type="binding site" evidence="1">
    <location>
        <position position="550"/>
    </location>
    <ligand>
        <name>Mg(2+)</name>
        <dbReference type="ChEBI" id="CHEBI:18420"/>
        <label>2</label>
    </ligand>
</feature>
<feature type="binding site" evidence="1">
    <location>
        <position position="554"/>
    </location>
    <ligand>
        <name>Mg(2+)</name>
        <dbReference type="ChEBI" id="CHEBI:18420"/>
        <label>1</label>
    </ligand>
</feature>
<feature type="binding site" evidence="1">
    <location>
        <position position="554"/>
    </location>
    <ligand>
        <name>Mg(2+)</name>
        <dbReference type="ChEBI" id="CHEBI:18420"/>
        <label>2</label>
    </ligand>
</feature>
<feature type="binding site" evidence="1">
    <location>
        <position position="696"/>
    </location>
    <ligand>
        <name>Mg(2+)</name>
        <dbReference type="ChEBI" id="CHEBI:18420"/>
        <label>3</label>
    </ligand>
</feature>
<feature type="binding site" evidence="1">
    <location>
        <position position="700"/>
    </location>
    <ligand>
        <name>Mg(2+)</name>
        <dbReference type="ChEBI" id="CHEBI:18420"/>
        <label>3</label>
    </ligand>
</feature>
<feature type="binding site" evidence="1">
    <location>
        <position position="704"/>
    </location>
    <ligand>
        <name>Mg(2+)</name>
        <dbReference type="ChEBI" id="CHEBI:18420"/>
        <label>3</label>
    </ligand>
</feature>
<feature type="sequence conflict" description="In Ref. 1; ABH10735." evidence="10" ref="1">
    <original>K</original>
    <variation>R</variation>
    <location>
        <position position="68"/>
    </location>
</feature>
<feature type="sequence conflict" description="In Ref. 6; BAD54752." evidence="10" ref="6">
    <original>G</original>
    <variation>C</variation>
    <location>
        <position position="283"/>
    </location>
</feature>
<feature type="sequence conflict" description="In Ref. 6; BAD54752." evidence="10" ref="6">
    <original>I</original>
    <variation>M</variation>
    <location>
        <position position="546"/>
    </location>
</feature>
<comment type="function">
    <text evidence="3 5 6">Involved in the biosynthesis of oryzalexin A-F phytoalexins. Catalyzes the conversion of ent-copalyl diphosphate to the phytoalexin precursor ent-sandaracopimaradiene.</text>
</comment>
<comment type="catalytic activity">
    <reaction evidence="3 6">
        <text>ent-copalyl diphosphate = ent-sandaracopimara-8(14),15-diene + diphosphate</text>
        <dbReference type="Rhea" id="RHEA:25536"/>
        <dbReference type="ChEBI" id="CHEBI:33019"/>
        <dbReference type="ChEBI" id="CHEBI:50061"/>
        <dbReference type="ChEBI" id="CHEBI:58553"/>
        <dbReference type="EC" id="4.2.3.29"/>
    </reaction>
    <physiologicalReaction direction="left-to-right" evidence="3 6">
        <dbReference type="Rhea" id="RHEA:25537"/>
    </physiologicalReaction>
</comment>
<comment type="catalytic activity">
    <reaction evidence="6">
        <text>9alpha-copalyl diphosphate = (12E)-9alpha-labda-8(17),12,14-triene + diphosphate</text>
        <dbReference type="Rhea" id="RHEA:32151"/>
        <dbReference type="ChEBI" id="CHEBI:33019"/>
        <dbReference type="ChEBI" id="CHEBI:58622"/>
        <dbReference type="ChEBI" id="CHEBI:63707"/>
        <dbReference type="EC" id="4.2.3.99"/>
    </reaction>
    <physiologicalReaction direction="left-to-right" evidence="6">
        <dbReference type="Rhea" id="RHEA:32152"/>
    </physiologicalReaction>
</comment>
<comment type="cofactor">
    <cofactor evidence="1">
        <name>Mg(2+)</name>
        <dbReference type="ChEBI" id="CHEBI:18420"/>
    </cofactor>
    <text evidence="1">Binds 3 Mg(2+) ions per subunit.</text>
</comment>
<comment type="biophysicochemical properties">
    <kinetics>
        <KM evidence="6">0.6 uM for ent-copalyl diphosphate</KM>
        <KM evidence="6">5 uM for 9alpha-copalyl diphosphate</KM>
    </kinetics>
</comment>
<comment type="subcellular location">
    <subcellularLocation>
        <location evidence="2">Plastid</location>
        <location evidence="2">Chloroplast</location>
    </subcellularLocation>
</comment>
<comment type="induction">
    <text evidence="3 4">Induced by UV irradiation.</text>
</comment>
<comment type="domain">
    <text evidence="10">The Asp-Asp-Xaa-Xaa-Asp/Glu (DDXXD/E) motif is important for the catalytic activity, presumably through binding to Mg(2+).</text>
</comment>
<comment type="miscellaneous">
    <text evidence="11">ent-sandaracopimaradiene is a precursor of the phytoalexins oryzalexins A-F. Phytoalexins are diterpenoid secondary metabolites involved in the defense mechanism of the plant and produced in response to attack (by a pathogen, elicitor or UV irradiation).</text>
</comment>
<comment type="similarity">
    <text evidence="10">Belongs to the terpene synthase family.</text>
</comment>
<gene>
    <name evidence="8" type="primary">KSL10</name>
    <name evidence="7" type="synonym">KS10</name>
    <name evidence="13" type="ordered locus">Os12g0491800</name>
    <name evidence="12" type="ordered locus">LOC_Os12g30824</name>
</gene>